<comment type="similarity">
    <text evidence="1">Belongs to the UPF0473 family.</text>
</comment>
<comment type="sequence caution" evidence="2">
    <conflict type="erroneous initiation">
        <sequence resource="EMBL-CDS" id="AAV63473"/>
    </conflict>
</comment>
<feature type="chain" id="PRO_0000304874" description="UPF0473 protein str1961">
    <location>
        <begin position="1"/>
        <end position="101"/>
    </location>
</feature>
<name>Y1961_STRT1</name>
<accession>Q5LXN9</accession>
<dbReference type="EMBL" id="CP000024">
    <property type="protein sequence ID" value="AAV63473.1"/>
    <property type="status" value="ALT_INIT"/>
    <property type="molecule type" value="Genomic_DNA"/>
</dbReference>
<dbReference type="RefSeq" id="WP_041827117.1">
    <property type="nucleotide sequence ID" value="NC_006449.1"/>
</dbReference>
<dbReference type="KEGG" id="stc:str1961"/>
<dbReference type="HOGENOM" id="CLU_146610_2_1_9"/>
<dbReference type="HAMAP" id="MF_01448">
    <property type="entry name" value="UPF0473"/>
    <property type="match status" value="1"/>
</dbReference>
<dbReference type="InterPro" id="IPR009711">
    <property type="entry name" value="UPF0473"/>
</dbReference>
<dbReference type="NCBIfam" id="NF010215">
    <property type="entry name" value="PRK13678.1-2"/>
    <property type="match status" value="1"/>
</dbReference>
<dbReference type="NCBIfam" id="NF010217">
    <property type="entry name" value="PRK13678.1-4"/>
    <property type="match status" value="1"/>
</dbReference>
<dbReference type="PANTHER" id="PTHR40066">
    <property type="entry name" value="UPF0473 PROTEIN CBO2561/CLC_2432"/>
    <property type="match status" value="1"/>
</dbReference>
<dbReference type="PANTHER" id="PTHR40066:SF1">
    <property type="entry name" value="UPF0473 PROTEIN CBO2561_CLC_2432"/>
    <property type="match status" value="1"/>
</dbReference>
<dbReference type="Pfam" id="PF06949">
    <property type="entry name" value="DUF1292"/>
    <property type="match status" value="1"/>
</dbReference>
<gene>
    <name type="ordered locus">str1961</name>
</gene>
<sequence length="101" mass="11466">MSHNHDHNHDHEVISLVDEQGNETLFEILLTIDGREEFGKNYVLLVPAGAEEDADGEIEIQAYSFTENEDGTEGDLQPIPEDSDAEWDMIEEVFNSFIDEN</sequence>
<evidence type="ECO:0000255" key="1">
    <source>
        <dbReference type="HAMAP-Rule" id="MF_01448"/>
    </source>
</evidence>
<evidence type="ECO:0000305" key="2"/>
<reference key="1">
    <citation type="journal article" date="2004" name="Nat. Biotechnol.">
        <title>Complete sequence and comparative genome analysis of the dairy bacterium Streptococcus thermophilus.</title>
        <authorList>
            <person name="Bolotin A."/>
            <person name="Quinquis B."/>
            <person name="Renault P."/>
            <person name="Sorokin A."/>
            <person name="Ehrlich S.D."/>
            <person name="Kulakauskas S."/>
            <person name="Lapidus A."/>
            <person name="Goltsman E."/>
            <person name="Mazur M."/>
            <person name="Pusch G.D."/>
            <person name="Fonstein M."/>
            <person name="Overbeek R."/>
            <person name="Kyprides N."/>
            <person name="Purnelle B."/>
            <person name="Prozzi D."/>
            <person name="Ngui K."/>
            <person name="Masuy D."/>
            <person name="Hancy F."/>
            <person name="Burteau S."/>
            <person name="Boutry M."/>
            <person name="Delcour J."/>
            <person name="Goffeau A."/>
            <person name="Hols P."/>
        </authorList>
    </citation>
    <scope>NUCLEOTIDE SEQUENCE [LARGE SCALE GENOMIC DNA]</scope>
    <source>
        <strain>CNRZ 1066</strain>
    </source>
</reference>
<proteinExistence type="inferred from homology"/>
<protein>
    <recommendedName>
        <fullName evidence="1">UPF0473 protein str1961</fullName>
    </recommendedName>
</protein>
<organism>
    <name type="scientific">Streptococcus thermophilus (strain CNRZ 1066)</name>
    <dbReference type="NCBI Taxonomy" id="299768"/>
    <lineage>
        <taxon>Bacteria</taxon>
        <taxon>Bacillati</taxon>
        <taxon>Bacillota</taxon>
        <taxon>Bacilli</taxon>
        <taxon>Lactobacillales</taxon>
        <taxon>Streptococcaceae</taxon>
        <taxon>Streptococcus</taxon>
    </lineage>
</organism>